<accession>Q8K4L6</accession>
<accession>D6C6N6</accession>
<accession>Q3TYZ5</accession>
<accession>Q924I1</accession>
<gene>
    <name evidence="24" type="primary">Mepe</name>
</gene>
<dbReference type="EMBL" id="AF314964">
    <property type="protein sequence ID" value="AAK70342.1"/>
    <property type="status" value="ALT_INIT"/>
    <property type="molecule type" value="mRNA"/>
</dbReference>
<dbReference type="EMBL" id="AF298661">
    <property type="protein sequence ID" value="AAM87687.1"/>
    <property type="molecule type" value="mRNA"/>
</dbReference>
<dbReference type="EMBL" id="AC122775">
    <property type="status" value="NOT_ANNOTATED_CDS"/>
    <property type="molecule type" value="Genomic_DNA"/>
</dbReference>
<dbReference type="EMBL" id="AK158231">
    <property type="protein sequence ID" value="BAE34415.1"/>
    <property type="molecule type" value="mRNA"/>
</dbReference>
<dbReference type="EMBL" id="FJ999695">
    <property type="protein sequence ID" value="ACS37545.1"/>
    <property type="status" value="ALT_SEQ"/>
    <property type="molecule type" value="Genomic_DNA"/>
</dbReference>
<dbReference type="EMBL" id="BC119162">
    <property type="protein sequence ID" value="AAI19163.1"/>
    <property type="status" value="ALT_INIT"/>
    <property type="molecule type" value="mRNA"/>
</dbReference>
<dbReference type="CCDS" id="CCDS51578.1"/>
<dbReference type="RefSeq" id="NP_444402.2">
    <property type="nucleotide sequence ID" value="NM_053172.2"/>
</dbReference>
<dbReference type="FunCoup" id="Q8K4L6">
    <property type="interactions" value="118"/>
</dbReference>
<dbReference type="STRING" id="10090.ENSMUSP00000065200"/>
<dbReference type="GlyCosmos" id="Q8K4L6">
    <property type="glycosylation" value="1 site, No reported glycans"/>
</dbReference>
<dbReference type="GlyGen" id="Q8K4L6">
    <property type="glycosylation" value="2 sites"/>
</dbReference>
<dbReference type="iPTMnet" id="Q8K4L6"/>
<dbReference type="PhosphoSitePlus" id="Q8K4L6"/>
<dbReference type="jPOST" id="Q8K4L6"/>
<dbReference type="PaxDb" id="10090-ENSMUSP00000065200"/>
<dbReference type="ProteomicsDB" id="341483"/>
<dbReference type="Antibodypedia" id="44860">
    <property type="antibodies" value="175 antibodies from 28 providers"/>
</dbReference>
<dbReference type="Ensembl" id="ENSMUST00000066207.4">
    <property type="protein sequence ID" value="ENSMUSP00000065200.4"/>
    <property type="gene ID" value="ENSMUSG00000053863.4"/>
</dbReference>
<dbReference type="GeneID" id="94111"/>
<dbReference type="KEGG" id="mmu:94111"/>
<dbReference type="UCSC" id="uc008ykh.2">
    <property type="organism name" value="mouse"/>
</dbReference>
<dbReference type="AGR" id="MGI:2137384"/>
<dbReference type="CTD" id="56955"/>
<dbReference type="MGI" id="MGI:2137384">
    <property type="gene designation" value="Mepe"/>
</dbReference>
<dbReference type="VEuPathDB" id="HostDB:ENSMUSG00000053863"/>
<dbReference type="eggNOG" id="ENOG502SW2S">
    <property type="taxonomic scope" value="Eukaryota"/>
</dbReference>
<dbReference type="GeneTree" id="ENSGT00390000010702"/>
<dbReference type="HOGENOM" id="CLU_039303_0_0_1"/>
<dbReference type="InParanoid" id="Q8K4L6"/>
<dbReference type="OMA" id="PGRKNQT"/>
<dbReference type="OrthoDB" id="9041543at2759"/>
<dbReference type="PhylomeDB" id="Q8K4L6"/>
<dbReference type="TreeFam" id="TF338655"/>
<dbReference type="Reactome" id="R-MMU-381426">
    <property type="pathway name" value="Regulation of Insulin-like Growth Factor (IGF) transport and uptake by Insulin-like Growth Factor Binding Proteins (IGFBPs)"/>
</dbReference>
<dbReference type="Reactome" id="R-MMU-8957275">
    <property type="pathway name" value="Post-translational protein phosphorylation"/>
</dbReference>
<dbReference type="BioGRID-ORCS" id="94111">
    <property type="hits" value="2 hits in 77 CRISPR screens"/>
</dbReference>
<dbReference type="PRO" id="PR:Q8K4L6"/>
<dbReference type="Proteomes" id="UP000000589">
    <property type="component" value="Chromosome 5"/>
</dbReference>
<dbReference type="RNAct" id="Q8K4L6">
    <property type="molecule type" value="protein"/>
</dbReference>
<dbReference type="Bgee" id="ENSMUSG00000053863">
    <property type="expression patterns" value="Expressed in hindlimb long bone and 9 other cell types or tissues"/>
</dbReference>
<dbReference type="GO" id="GO:0031012">
    <property type="term" value="C:extracellular matrix"/>
    <property type="evidence" value="ECO:0000266"/>
    <property type="project" value="MGI"/>
</dbReference>
<dbReference type="GO" id="GO:0005576">
    <property type="term" value="C:extracellular region"/>
    <property type="evidence" value="ECO:0007669"/>
    <property type="project" value="UniProtKB-SubCell"/>
</dbReference>
<dbReference type="GO" id="GO:0030282">
    <property type="term" value="P:bone mineralization"/>
    <property type="evidence" value="ECO:0000315"/>
    <property type="project" value="MGI"/>
</dbReference>
<dbReference type="GO" id="GO:0030502">
    <property type="term" value="P:negative regulation of bone mineralization"/>
    <property type="evidence" value="ECO:0000314"/>
    <property type="project" value="MGI"/>
</dbReference>
<dbReference type="GO" id="GO:0001501">
    <property type="term" value="P:skeletal system development"/>
    <property type="evidence" value="ECO:0000304"/>
    <property type="project" value="MGI"/>
</dbReference>
<dbReference type="InterPro" id="IPR009837">
    <property type="entry name" value="MEPE"/>
</dbReference>
<dbReference type="PANTHER" id="PTHR16510">
    <property type="entry name" value="EXTRACELLULAR MATRIX PHOSPHOGLYCOPROTEIN WITH ASARM MOTIF"/>
    <property type="match status" value="1"/>
</dbReference>
<dbReference type="PANTHER" id="PTHR16510:SF4">
    <property type="entry name" value="MATRIX EXTRACELLULAR PHOSPHOGLYCOPROTEIN"/>
    <property type="match status" value="1"/>
</dbReference>
<dbReference type="Pfam" id="PF07175">
    <property type="entry name" value="Osteoregulin"/>
    <property type="match status" value="1"/>
</dbReference>
<proteinExistence type="evidence at protein level"/>
<comment type="function">
    <text evidence="2 5 6 9 12 13 15">Regulates renal phosphate and uric acid excretion (PubMed:26051469). Regulates bone mineralization by osteoblasts and cartilage mineralization by chondrocytes (PubMed:11414762, PubMed:12421822, PubMed:15843468, PubMed:22766095). Regulates the mineralization of the extracellular matrix of the craniofacial complex, such as teeth, bone and cartilage (PubMed:26927967). Increases dental pulp stem cell proliferation (By similarity).</text>
</comment>
<comment type="subunit">
    <text evidence="2">Interacts (via ASARM motif) with PHEX; the interaction is zinc-dependent.</text>
</comment>
<comment type="subcellular location">
    <subcellularLocation>
        <location evidence="6 10 13">Secreted</location>
        <location evidence="6 10 13">Extracellular space</location>
        <location evidence="6 10 13">Extracellular matrix</location>
    </subcellularLocation>
    <subcellularLocation>
        <location evidence="2">Secreted</location>
    </subcellularLocation>
</comment>
<comment type="tissue specificity">
    <text evidence="5 6 8 10 11 12 13 14 15">Expressed in osteocytes (at protein level) (PubMed:12421822, PubMed:15221418). Expressed by chondrocytes, specifically in the hypertrophic zone of the bone growth plate (at protein level) (PubMed:22766095). Expressed in osteoblasts in bone (at protein level) (PubMed:11414762, PubMed:15221418, PubMed:18597632). Expressed by osteoblasts within the metaphysis (at protein level) (PubMed:15221418, PubMed:22766095). Expressed at low levels in white fat, brown fat, testes, brain and aorta (PubMed:12421822). Expressed in the craniofacial complex (at protein level) (PubMed:26927967). Expressed in odontoblasts, ameloblasts and in predentin during tooth development (at protein level) (PubMed:22042093). Expressed in the kidney (at protein level) (PubMed:26051469). Expressed in osteocytes in mandibular condylar cartilage and tibial cartilage (at protein level) (PubMed:26428891). Expressed in salivary glands (PubMed:15329369).</text>
</comment>
<comment type="developmental stage">
    <text evidence="7 11 14 15">Detected at 16 days post coitum (dpc) in both epithelial and mesenchymal components of the tooth organ (PubMed:26927967). Also detected at 16 dpc and 18 dpc in mandibular bone osteocytes (PubMed:26428891). Detected at 15 dpc in the bone collar (PubMed:26428891). Detected at 13 dpc in the cartilage matrix (PubMed:26428891). Detected at postnatal day 3 in odontoblasts and ameloblasts (PubMed:22042093). At postnatal day 5, expression is decreased in dental papilla cells, but increased in the predentin (PubMed:22042093). By postnatal day 9, is only detected in the predentin (PubMed:22042093). Detected at postnatal day 2 in osteoblasts, the calcified cartilage cores in primary metaphyseal bone and in osterocytes embedded in cortical bone matrix (PubMed:15221418). At postnatal day 84 expression is detected in the osteocytes of cortical and trabecular bone (PubMed:15221418).</text>
</comment>
<comment type="induction">
    <text evidence="5 6 7">Induced by ascorbate and beta-glycerophosphate (PubMed:11414762, PubMed:12421822). Induced expression during bone fracture healing, with low levels of expression being detected in fibroblast-like cells at 6 days post-fracture, and increased expression at 10 days post-fracture in late hypertrophic chondrocytes. At 14 days post-fracture, expression is detected in osteocytes, osteoblasts, and hypertrophic chondrocytes. By 28 days post-fracture, expression was highest in osteocytes and lower in osteoblasts (PubMed:15221418). Down-regulated by 1-alpha-25-dihydroxyvitamin D3 (calcitriol) (PubMed:11414762).</text>
</comment>
<comment type="domain">
    <text evidence="2 9 12 13">The acidic serine aspartate-rich MEPE-associated (ASARM) motif is sufficient when phosphorylated to inhibit bone mineralization by osteoblasts and cartilage mineralization by chondrocytes by binding hydroxyapatite crystals during the mineralization stage (PubMed:15843468, PubMed:22766095, PubMed:26051469). It can also inhibit dentin mineralization (By similarity).</text>
</comment>
<comment type="domain">
    <text evidence="2">The dentonin region is sufficient to promote dental pulp stem cell proliferation. It can also stimulate bone formation, osteoblast differentiation, and activate integrin signaling pathways.</text>
</comment>
<comment type="PTM">
    <text evidence="9 10 12">Phosphorylated on serine residues in the ASARM motif; the phosphorylation is important for the inhibition of bone mineralization.</text>
</comment>
<comment type="PTM">
    <text evidence="2">Cleaved by CTSB/cathepsin B; the cleavage is blocked by metalloprotease PHEX.</text>
</comment>
<comment type="disruption phenotype">
    <text evidence="6 9 13 15">Mutant mice exhibit increased cancellous bone mass and no loss of trabecular bone characteristics (PubMed:12421822, PubMed:26051469). They also exhibit decreased biomechanical strength in their bones and increased skeletal mineralization (PubMed:15843468). In craniofacial complex development, mutant mice also exhibit hypermineralization in predentin, dentin and enamel of teeth and decreased expression of AMBN, ENAM, IBSP, DMP1, DSPP and SPP1 (PubMed:26927967). Mutant mice also exhibit hyperphostatemia and increased expression of SLC34A1/NPT2a, SLC34A3/NPT2c and VEGF in the kidney (PubMed:26051469). Hyperuricemia and reduced fractional excretion of uric acid was also exhibited (PubMed:26051469). As mutant mice age, bone mineral density and content is increased (PubMed:26051469).</text>
</comment>
<comment type="miscellaneous">
    <text evidence="18">It has been proposed that MEPE is cleaved and generate 2 peptides dentonin and ASARM peptide.</text>
</comment>
<comment type="similarity">
    <text evidence="18">Belongs to the PF07175/osteoregulin family.</text>
</comment>
<comment type="sequence caution" evidence="18">
    <conflict type="erroneous initiation">
        <sequence resource="EMBL-CDS" id="AAI19163"/>
    </conflict>
    <text>Truncated N-terminus.</text>
</comment>
<comment type="sequence caution" evidence="18">
    <conflict type="erroneous initiation">
        <sequence resource="EMBL-CDS" id="AAK70342"/>
    </conflict>
    <text>Truncated N-terminus.</text>
</comment>
<comment type="sequence caution" evidence="18">
    <conflict type="erroneous gene model prediction">
        <sequence resource="EMBL-CDS" id="ACS37545"/>
    </conflict>
</comment>
<name>MEPE_MOUSE</name>
<feature type="signal peptide" evidence="3">
    <location>
        <begin position="1"/>
        <end position="24"/>
    </location>
</feature>
<feature type="chain" id="PRO_5014107441" description="Matrix extracellular phosphoglycoprotein" evidence="3">
    <location>
        <begin position="25"/>
        <end position="441"/>
    </location>
</feature>
<feature type="region of interest" description="Disordered" evidence="4">
    <location>
        <begin position="137"/>
        <end position="441"/>
    </location>
</feature>
<feature type="region of interest" description="Dentonin" evidence="2">
    <location>
        <begin position="178"/>
        <end position="200"/>
    </location>
</feature>
<feature type="region of interest" description="ASARM motif; interaction with PHEX" evidence="10">
    <location>
        <begin position="424"/>
        <end position="441"/>
    </location>
</feature>
<feature type="short sequence motif" description="Cell attachment site" evidence="2">
    <location>
        <begin position="183"/>
        <end position="185"/>
    </location>
</feature>
<feature type="compositionally biased region" description="Basic residues" evidence="4">
    <location>
        <begin position="142"/>
        <end position="156"/>
    </location>
</feature>
<feature type="compositionally biased region" description="Polar residues" evidence="4">
    <location>
        <begin position="211"/>
        <end position="223"/>
    </location>
</feature>
<feature type="compositionally biased region" description="Basic and acidic residues" evidence="4">
    <location>
        <begin position="313"/>
        <end position="325"/>
    </location>
</feature>
<feature type="compositionally biased region" description="Polar residues" evidence="4">
    <location>
        <begin position="349"/>
        <end position="358"/>
    </location>
</feature>
<feature type="compositionally biased region" description="Polar residues" evidence="4">
    <location>
        <begin position="391"/>
        <end position="405"/>
    </location>
</feature>
<feature type="compositionally biased region" description="Low complexity" evidence="4">
    <location>
        <begin position="428"/>
        <end position="441"/>
    </location>
</feature>
<feature type="glycosylation site" description="N-linked (GlcNAc...) asparagine" evidence="3">
    <location>
        <position position="82"/>
    </location>
</feature>
<feature type="glycosylation site" description="O-linked (Xyl...) (chondroitin sulfate) serine" evidence="2">
    <location>
        <position position="192"/>
    </location>
</feature>
<feature type="sequence conflict" description="In Ref. 4; BAE34415." evidence="18" ref="4">
    <original>T</original>
    <variation>M</variation>
    <location>
        <position position="2"/>
    </location>
</feature>
<feature type="sequence conflict" description="In Ref. 4; BAE34415." evidence="18" ref="4">
    <original>V</original>
    <variation>A</variation>
    <location>
        <position position="14"/>
    </location>
</feature>
<feature type="sequence conflict" description="In Ref. 4; BAE34415." evidence="18" ref="4">
    <original>R</original>
    <variation>G</variation>
    <location>
        <position position="81"/>
    </location>
</feature>
<feature type="sequence conflict" description="In Ref. 4; BAE34415." evidence="18" ref="4">
    <original>A</original>
    <variation>V</variation>
    <location>
        <position position="120"/>
    </location>
</feature>
<feature type="sequence conflict" description="In Ref. 4; BAE34415." evidence="18" ref="4">
    <original>S</original>
    <variation>T</variation>
    <location>
        <position position="132"/>
    </location>
</feature>
<feature type="sequence conflict" description="In Ref. 4; BAE34415." evidence="18" ref="4">
    <original>L</original>
    <variation>V</variation>
    <location>
        <position position="219"/>
    </location>
</feature>
<feature type="sequence conflict" description="In Ref. 4; BAE34415." evidence="18" ref="4">
    <original>N</original>
    <variation>D</variation>
    <location>
        <position position="293"/>
    </location>
</feature>
<feature type="sequence conflict" description="In Ref. 4; BAE34415." evidence="18" ref="4">
    <original>S</original>
    <variation>A</variation>
    <location>
        <position position="340"/>
    </location>
</feature>
<feature type="sequence conflict" description="In Ref. 4; BAE34415." evidence="18" ref="4">
    <original>N</original>
    <variation>H</variation>
    <location>
        <position position="414"/>
    </location>
</feature>
<keyword id="KW-0091">Biomineralization</keyword>
<keyword id="KW-0272">Extracellular matrix</keyword>
<keyword id="KW-0325">Glycoprotein</keyword>
<keyword id="KW-0597">Phosphoprotein</keyword>
<keyword id="KW-0654">Proteoglycan</keyword>
<keyword id="KW-1185">Reference proteome</keyword>
<keyword id="KW-0964">Secreted</keyword>
<keyword id="KW-0732">Signal</keyword>
<sequence>MTPEGLMKMQAVSVGLLLFSMTWAAPMPNEDRSSCGNQDSIHKDLAASVYPDPTVDEGTEDGQGALLHPPGQDRYGAALLRNITQPVKSLVTGAELRREGNQEKRPQSVLSVIPADVNDAKVSLKDIKNQESYLLTQSSPVKSKHTKHTRQTRRSTHYLTHLPQIKKTPSDLEGSGSPDLLVRGDNDVPPFSGDGQHFMHIPGKGGAGSGPESSTSRPLSGSSKAEVIDPHMSGLGSNEIPGREGHGGSAYATRDKAAQGAGSAGGSLVGGSNEITGSTNFRELPGKEGNRINAGSQNAHQGKVEFHYPQVASREKVKGGVEHAGRAGYNEIPKSSKGSSSKDAEESKGNQLTLTASQRFPGKGKSQGPALPSHSLSNEVKSEENHYVFHGQNNLTPNKGMSQRRGSWPSRRPNSHRRASTRQRDSSESSSSGSSSESHGD</sequence>
<organism evidence="21">
    <name type="scientific">Mus musculus</name>
    <name type="common">Mouse</name>
    <dbReference type="NCBI Taxonomy" id="10090"/>
    <lineage>
        <taxon>Eukaryota</taxon>
        <taxon>Metazoa</taxon>
        <taxon>Chordata</taxon>
        <taxon>Craniata</taxon>
        <taxon>Vertebrata</taxon>
        <taxon>Euteleostomi</taxon>
        <taxon>Mammalia</taxon>
        <taxon>Eutheria</taxon>
        <taxon>Euarchontoglires</taxon>
        <taxon>Glires</taxon>
        <taxon>Rodentia</taxon>
        <taxon>Myomorpha</taxon>
        <taxon>Muroidea</taxon>
        <taxon>Muridae</taxon>
        <taxon>Murinae</taxon>
        <taxon>Mus</taxon>
        <taxon>Mus</taxon>
    </lineage>
</organism>
<protein>
    <recommendedName>
        <fullName evidence="16">Matrix extracellular phosphoglycoprotein</fullName>
    </recommendedName>
    <alternativeName>
        <fullName evidence="17">Osteoblast/osteocyte factor 45</fullName>
        <shortName evidence="17">OF45</shortName>
    </alternativeName>
    <alternativeName>
        <fullName evidence="1">Osteoregulin</fullName>
    </alternativeName>
</protein>
<evidence type="ECO:0000250" key="1">
    <source>
        <dbReference type="UniProtKB" id="Q9ES02"/>
    </source>
</evidence>
<evidence type="ECO:0000250" key="2">
    <source>
        <dbReference type="UniProtKB" id="Q9NQ76"/>
    </source>
</evidence>
<evidence type="ECO:0000255" key="3"/>
<evidence type="ECO:0000256" key="4">
    <source>
        <dbReference type="SAM" id="MobiDB-lite"/>
    </source>
</evidence>
<evidence type="ECO:0000269" key="5">
    <source>
    </source>
</evidence>
<evidence type="ECO:0000269" key="6">
    <source>
    </source>
</evidence>
<evidence type="ECO:0000269" key="7">
    <source>
    </source>
</evidence>
<evidence type="ECO:0000269" key="8">
    <source>
    </source>
</evidence>
<evidence type="ECO:0000269" key="9">
    <source>
    </source>
</evidence>
<evidence type="ECO:0000269" key="10">
    <source>
    </source>
</evidence>
<evidence type="ECO:0000269" key="11">
    <source>
    </source>
</evidence>
<evidence type="ECO:0000269" key="12">
    <source>
    </source>
</evidence>
<evidence type="ECO:0000269" key="13">
    <source>
    </source>
</evidence>
<evidence type="ECO:0000269" key="14">
    <source>
    </source>
</evidence>
<evidence type="ECO:0000269" key="15">
    <source>
    </source>
</evidence>
<evidence type="ECO:0000303" key="16">
    <source>
    </source>
</evidence>
<evidence type="ECO:0000303" key="17">
    <source>
    </source>
</evidence>
<evidence type="ECO:0000305" key="18"/>
<evidence type="ECO:0000312" key="19">
    <source>
        <dbReference type="EMBL" id="AAI19163.1"/>
    </source>
</evidence>
<evidence type="ECO:0000312" key="20">
    <source>
        <dbReference type="EMBL" id="AAK70342.1"/>
    </source>
</evidence>
<evidence type="ECO:0000312" key="21">
    <source>
        <dbReference type="EMBL" id="AAM87687.1"/>
    </source>
</evidence>
<evidence type="ECO:0000312" key="22">
    <source>
        <dbReference type="EMBL" id="ACS37545.1"/>
    </source>
</evidence>
<evidence type="ECO:0000312" key="23">
    <source>
        <dbReference type="EMBL" id="BAE34415.1"/>
    </source>
</evidence>
<evidence type="ECO:0000312" key="24">
    <source>
        <dbReference type="MGI" id="MGI:2137384"/>
    </source>
</evidence>
<reference evidence="20" key="1">
    <citation type="journal article" date="2001" name="Genomics">
        <title>Mepe, the gene encoding a tumor-secreted protein in oncogenic hypophosphatemic osteomalacia, is expressed in bone.</title>
        <authorList>
            <person name="Argiro L."/>
            <person name="Desbarats M."/>
            <person name="Glorieux F.H."/>
            <person name="Ecarot B."/>
        </authorList>
    </citation>
    <scope>NUCLEOTIDE SEQUENCE [MRNA]</scope>
    <scope>FUNCTION</scope>
    <scope>TISSUE SPECIFICITY</scope>
    <scope>INDUCTION</scope>
    <source>
        <strain evidence="20">C57BL/6J</strain>
    </source>
</reference>
<reference evidence="21" key="2">
    <citation type="journal article" date="2003" name="J. Biol. Chem.">
        <title>Targeted disruption of the osteoblast/osteocyte factor 45 gene (OF45) results in increased bone formation and bone mass.</title>
        <authorList>
            <person name="Gowen L.C."/>
            <person name="Petersen D.N."/>
            <person name="Mansolf A.L."/>
            <person name="Qi H."/>
            <person name="Stock J.L."/>
            <person name="Tkalcevic G.T."/>
            <person name="Simmons H.A."/>
            <person name="Crawford D.T."/>
            <person name="Chidsey-Frink K.L."/>
            <person name="Ke H.Z."/>
            <person name="McNeish J.D."/>
            <person name="Brown T.A."/>
        </authorList>
    </citation>
    <scope>NUCLEOTIDE SEQUENCE [MRNA]</scope>
    <scope>FUNCTION</scope>
    <scope>SUBCELLULAR LOCATION</scope>
    <scope>TISSUE SPECIFICITY</scope>
    <scope>INDUCTION</scope>
    <scope>DISRUPTION PHENOTYPE</scope>
</reference>
<reference evidence="22" key="3">
    <citation type="journal article" date="2010" name="Cell. Mol. Life Sci.">
        <title>MEPE evolution in mammals reveals regions and residues of prime functional importance.</title>
        <authorList>
            <person name="Bardet C."/>
            <person name="Delgado S."/>
            <person name="Sire J.Y."/>
        </authorList>
    </citation>
    <scope>NUCLEOTIDE SEQUENCE [GENOMIC DNA]</scope>
</reference>
<reference evidence="23" key="4">
    <citation type="journal article" date="2005" name="Science">
        <title>The transcriptional landscape of the mammalian genome.</title>
        <authorList>
            <person name="Carninci P."/>
            <person name="Kasukawa T."/>
            <person name="Katayama S."/>
            <person name="Gough J."/>
            <person name="Frith M.C."/>
            <person name="Maeda N."/>
            <person name="Oyama R."/>
            <person name="Ravasi T."/>
            <person name="Lenhard B."/>
            <person name="Wells C."/>
            <person name="Kodzius R."/>
            <person name="Shimokawa K."/>
            <person name="Bajic V.B."/>
            <person name="Brenner S.E."/>
            <person name="Batalov S."/>
            <person name="Forrest A.R."/>
            <person name="Zavolan M."/>
            <person name="Davis M.J."/>
            <person name="Wilming L.G."/>
            <person name="Aidinis V."/>
            <person name="Allen J.E."/>
            <person name="Ambesi-Impiombato A."/>
            <person name="Apweiler R."/>
            <person name="Aturaliya R.N."/>
            <person name="Bailey T.L."/>
            <person name="Bansal M."/>
            <person name="Baxter L."/>
            <person name="Beisel K.W."/>
            <person name="Bersano T."/>
            <person name="Bono H."/>
            <person name="Chalk A.M."/>
            <person name="Chiu K.P."/>
            <person name="Choudhary V."/>
            <person name="Christoffels A."/>
            <person name="Clutterbuck D.R."/>
            <person name="Crowe M.L."/>
            <person name="Dalla E."/>
            <person name="Dalrymple B.P."/>
            <person name="de Bono B."/>
            <person name="Della Gatta G."/>
            <person name="di Bernardo D."/>
            <person name="Down T."/>
            <person name="Engstrom P."/>
            <person name="Fagiolini M."/>
            <person name="Faulkner G."/>
            <person name="Fletcher C.F."/>
            <person name="Fukushima T."/>
            <person name="Furuno M."/>
            <person name="Futaki S."/>
            <person name="Gariboldi M."/>
            <person name="Georgii-Hemming P."/>
            <person name="Gingeras T.R."/>
            <person name="Gojobori T."/>
            <person name="Green R.E."/>
            <person name="Gustincich S."/>
            <person name="Harbers M."/>
            <person name="Hayashi Y."/>
            <person name="Hensch T.K."/>
            <person name="Hirokawa N."/>
            <person name="Hill D."/>
            <person name="Huminiecki L."/>
            <person name="Iacono M."/>
            <person name="Ikeo K."/>
            <person name="Iwama A."/>
            <person name="Ishikawa T."/>
            <person name="Jakt M."/>
            <person name="Kanapin A."/>
            <person name="Katoh M."/>
            <person name="Kawasawa Y."/>
            <person name="Kelso J."/>
            <person name="Kitamura H."/>
            <person name="Kitano H."/>
            <person name="Kollias G."/>
            <person name="Krishnan S.P."/>
            <person name="Kruger A."/>
            <person name="Kummerfeld S.K."/>
            <person name="Kurochkin I.V."/>
            <person name="Lareau L.F."/>
            <person name="Lazarevic D."/>
            <person name="Lipovich L."/>
            <person name="Liu J."/>
            <person name="Liuni S."/>
            <person name="McWilliam S."/>
            <person name="Madan Babu M."/>
            <person name="Madera M."/>
            <person name="Marchionni L."/>
            <person name="Matsuda H."/>
            <person name="Matsuzawa S."/>
            <person name="Miki H."/>
            <person name="Mignone F."/>
            <person name="Miyake S."/>
            <person name="Morris K."/>
            <person name="Mottagui-Tabar S."/>
            <person name="Mulder N."/>
            <person name="Nakano N."/>
            <person name="Nakauchi H."/>
            <person name="Ng P."/>
            <person name="Nilsson R."/>
            <person name="Nishiguchi S."/>
            <person name="Nishikawa S."/>
            <person name="Nori F."/>
            <person name="Ohara O."/>
            <person name="Okazaki Y."/>
            <person name="Orlando V."/>
            <person name="Pang K.C."/>
            <person name="Pavan W.J."/>
            <person name="Pavesi G."/>
            <person name="Pesole G."/>
            <person name="Petrovsky N."/>
            <person name="Piazza S."/>
            <person name="Reed J."/>
            <person name="Reid J.F."/>
            <person name="Ring B.Z."/>
            <person name="Ringwald M."/>
            <person name="Rost B."/>
            <person name="Ruan Y."/>
            <person name="Salzberg S.L."/>
            <person name="Sandelin A."/>
            <person name="Schneider C."/>
            <person name="Schoenbach C."/>
            <person name="Sekiguchi K."/>
            <person name="Semple C.A."/>
            <person name="Seno S."/>
            <person name="Sessa L."/>
            <person name="Sheng Y."/>
            <person name="Shibata Y."/>
            <person name="Shimada H."/>
            <person name="Shimada K."/>
            <person name="Silva D."/>
            <person name="Sinclair B."/>
            <person name="Sperling S."/>
            <person name="Stupka E."/>
            <person name="Sugiura K."/>
            <person name="Sultana R."/>
            <person name="Takenaka Y."/>
            <person name="Taki K."/>
            <person name="Tammoja K."/>
            <person name="Tan S.L."/>
            <person name="Tang S."/>
            <person name="Taylor M.S."/>
            <person name="Tegner J."/>
            <person name="Teichmann S.A."/>
            <person name="Ueda H.R."/>
            <person name="van Nimwegen E."/>
            <person name="Verardo R."/>
            <person name="Wei C.L."/>
            <person name="Yagi K."/>
            <person name="Yamanishi H."/>
            <person name="Zabarovsky E."/>
            <person name="Zhu S."/>
            <person name="Zimmer A."/>
            <person name="Hide W."/>
            <person name="Bult C."/>
            <person name="Grimmond S.M."/>
            <person name="Teasdale R.D."/>
            <person name="Liu E.T."/>
            <person name="Brusic V."/>
            <person name="Quackenbush J."/>
            <person name="Wahlestedt C."/>
            <person name="Mattick J.S."/>
            <person name="Hume D.A."/>
            <person name="Kai C."/>
            <person name="Sasaki D."/>
            <person name="Tomaru Y."/>
            <person name="Fukuda S."/>
            <person name="Kanamori-Katayama M."/>
            <person name="Suzuki M."/>
            <person name="Aoki J."/>
            <person name="Arakawa T."/>
            <person name="Iida J."/>
            <person name="Imamura K."/>
            <person name="Itoh M."/>
            <person name="Kato T."/>
            <person name="Kawaji H."/>
            <person name="Kawagashira N."/>
            <person name="Kawashima T."/>
            <person name="Kojima M."/>
            <person name="Kondo S."/>
            <person name="Konno H."/>
            <person name="Nakano K."/>
            <person name="Ninomiya N."/>
            <person name="Nishio T."/>
            <person name="Okada M."/>
            <person name="Plessy C."/>
            <person name="Shibata K."/>
            <person name="Shiraki T."/>
            <person name="Suzuki S."/>
            <person name="Tagami M."/>
            <person name="Waki K."/>
            <person name="Watahiki A."/>
            <person name="Okamura-Oho Y."/>
            <person name="Suzuki H."/>
            <person name="Kawai J."/>
            <person name="Hayashizaki Y."/>
        </authorList>
    </citation>
    <scope>NUCLEOTIDE SEQUENCE [LARGE SCALE MRNA]</scope>
    <source>
        <strain evidence="23">C57BL/6J</strain>
        <tissue evidence="23">Inner ear</tissue>
    </source>
</reference>
<reference evidence="21" key="5">
    <citation type="journal article" date="2009" name="PLoS Biol.">
        <title>Lineage-specific biology revealed by a finished genome assembly of the mouse.</title>
        <authorList>
            <person name="Church D.M."/>
            <person name="Goodstadt L."/>
            <person name="Hillier L.W."/>
            <person name="Zody M.C."/>
            <person name="Goldstein S."/>
            <person name="She X."/>
            <person name="Bult C.J."/>
            <person name="Agarwala R."/>
            <person name="Cherry J.L."/>
            <person name="DiCuccio M."/>
            <person name="Hlavina W."/>
            <person name="Kapustin Y."/>
            <person name="Meric P."/>
            <person name="Maglott D."/>
            <person name="Birtle Z."/>
            <person name="Marques A.C."/>
            <person name="Graves T."/>
            <person name="Zhou S."/>
            <person name="Teague B."/>
            <person name="Potamousis K."/>
            <person name="Churas C."/>
            <person name="Place M."/>
            <person name="Herschleb J."/>
            <person name="Runnheim R."/>
            <person name="Forrest D."/>
            <person name="Amos-Landgraf J."/>
            <person name="Schwartz D.C."/>
            <person name="Cheng Z."/>
            <person name="Lindblad-Toh K."/>
            <person name="Eichler E.E."/>
            <person name="Ponting C.P."/>
        </authorList>
    </citation>
    <scope>NUCLEOTIDE SEQUENCE [LARGE SCALE GENOMIC DNA]</scope>
    <source>
        <strain>C57BL/6J</strain>
    </source>
</reference>
<reference evidence="19" key="6">
    <citation type="journal article" date="2004" name="Genome Res.">
        <title>The status, quality, and expansion of the NIH full-length cDNA project: the Mammalian Gene Collection (MGC).</title>
        <authorList>
            <consortium name="The MGC Project Team"/>
        </authorList>
    </citation>
    <scope>NUCLEOTIDE SEQUENCE [LARGE SCALE MRNA]</scope>
</reference>
<reference evidence="18" key="7">
    <citation type="journal article" date="2004" name="Histochem. Cell Biol.">
        <title>Mepe is expressed during skeletal development and regeneration.</title>
        <authorList>
            <person name="Lu C."/>
            <person name="Huang S."/>
            <person name="Miclau T."/>
            <person name="Helms J.A."/>
            <person name="Colnot C."/>
        </authorList>
    </citation>
    <scope>TISSUE SPECIFICITY</scope>
    <scope>DEVELOPMENTAL STAGE</scope>
    <scope>INDUCTION</scope>
</reference>
<reference evidence="18" key="8">
    <citation type="journal article" date="2004" name="J. Dent. Res.">
        <title>Expression of SIBLINGs and their partner MMPs in salivary glands.</title>
        <authorList>
            <person name="Ogbureke K.U."/>
            <person name="Fisher L.W."/>
        </authorList>
    </citation>
    <scope>TISSUE SPECIFICITY</scope>
</reference>
<reference evidence="18" key="9">
    <citation type="journal article" date="2005" name="J. Am. Soc. Nephrol.">
        <title>Role of matrix extracellular phosphoglycoprotein in the pathogenesis of X-linked hypophosphatemia.</title>
        <authorList>
            <person name="Liu S."/>
            <person name="Brown T.A."/>
            <person name="Zhou J."/>
            <person name="Xiao Z.S."/>
            <person name="Awad H."/>
            <person name="Guilak F."/>
            <person name="Quarles L.D."/>
        </authorList>
    </citation>
    <scope>FUNCTION</scope>
    <scope>PHOSPHORYLATION</scope>
    <scope>DISRUPTION PHENOTYPE</scope>
</reference>
<reference evidence="18" key="10">
    <citation type="journal article" date="2008" name="J. Bone Miner. Res.">
        <title>MEPE-ASARM peptides control extracellular matrix mineralization by binding to hydroxyapatite: an inhibition regulated by PHEX cleavage of ASARM.</title>
        <authorList>
            <person name="Addison W.N."/>
            <person name="Nakano Y."/>
            <person name="Loisel T."/>
            <person name="Crine P."/>
            <person name="McKee M.D."/>
        </authorList>
    </citation>
    <scope>SUBCELLULAR LOCATION</scope>
    <scope>TISSUE SPECIFICITY</scope>
    <scope>PHOSPHORYLATION</scope>
</reference>
<reference evidence="18" key="11">
    <citation type="journal article" date="2012" name="Bone">
        <title>MEPE is a novel regulator of growth plate cartilage mineralization.</title>
        <authorList>
            <person name="Staines K.A."/>
            <person name="Mackenzie N.C."/>
            <person name="Clarkin C.E."/>
            <person name="Zelenchuk L."/>
            <person name="Rowe P.S."/>
            <person name="MacRae V.E."/>
            <person name="Farquharson C."/>
        </authorList>
    </citation>
    <scope>FUNCTION</scope>
    <scope>TISSUE SPECIFICITY</scope>
    <scope>PHOSPHORYLATION</scope>
</reference>
<reference evidence="18" key="12">
    <citation type="journal article" date="2012" name="J. Mol. Histol.">
        <title>Developmental changes and regional localization of Dspp, Mepe, Mimecan and Versican in postnatal developing mouse teeth.</title>
        <authorList>
            <person name="Hou C."/>
            <person name="Liu Z.X."/>
            <person name="Tang K.L."/>
            <person name="Wang M.G."/>
            <person name="Sun J."/>
            <person name="Wang J."/>
            <person name="Li S."/>
        </authorList>
    </citation>
    <scope>TISSUE SPECIFICITY</scope>
    <scope>DEVELOPMENTAL STAGE</scope>
</reference>
<reference evidence="18" key="13">
    <citation type="journal article" date="2015" name="Bone">
        <title>Age dependent regulation of bone-mass and renal function by the MEPE ASARM-motif.</title>
        <authorList>
            <person name="Zelenchuk L.V."/>
            <person name="Hedge A.M."/>
            <person name="Rowe P.S."/>
        </authorList>
    </citation>
    <scope>FUNCTION</scope>
    <scope>SUBCELLULAR LOCATION</scope>
    <scope>TISSUE SPECIFICITY</scope>
    <scope>DOMAIN</scope>
    <scope>DISRUPTION PHENOTYPE</scope>
</reference>
<reference evidence="18" key="14">
    <citation type="journal article" date="2015" name="Eur. J. Histochem.">
        <title>An in situ hybridization study of perlecan, DMP1, and MEPE in developing condylar cartilage of the fetal mouse mandible and limb bud cartilage.</title>
        <authorList>
            <person name="Fujikawa K."/>
            <person name="Yokohama-Tamaki T."/>
            <person name="Morita T."/>
            <person name="Baba O."/>
            <person name="Qin C."/>
            <person name="Shibata S."/>
        </authorList>
    </citation>
    <scope>TISSUE SPECIFICITY</scope>
    <scope>DEVELOPMENTAL STAGE</scope>
</reference>
<reference evidence="18" key="15">
    <citation type="journal article" date="2016" name="J. Histochem. Cytochem.">
        <title>MEPE Localization in the Craniofacial Complex and Function in Tooth Dentin Formation.</title>
        <authorList>
            <person name="Gullard A."/>
            <person name="Gluhak-Heinrich J."/>
            <person name="Papagerakis S."/>
            <person name="Sohn P."/>
            <person name="Unterbrink A."/>
            <person name="Chen S."/>
            <person name="MacDougall M."/>
        </authorList>
    </citation>
    <scope>FUNCTION</scope>
    <scope>TISSUE SPECIFICITY</scope>
    <scope>DEVELOPMENTAL STAGE</scope>
    <scope>DISRUPTION PHENOTYPE</scope>
</reference>